<evidence type="ECO:0000250" key="1"/>
<evidence type="ECO:0000250" key="2">
    <source>
        <dbReference type="UniProtKB" id="O15232"/>
    </source>
</evidence>
<evidence type="ECO:0000255" key="3"/>
<evidence type="ECO:0000255" key="4">
    <source>
        <dbReference type="PROSITE-ProRule" id="PRU00076"/>
    </source>
</evidence>
<evidence type="ECO:0000255" key="5">
    <source>
        <dbReference type="PROSITE-ProRule" id="PRU00219"/>
    </source>
</evidence>
<evidence type="ECO:0000269" key="6">
    <source>
    </source>
</evidence>
<evidence type="ECO:0000269" key="7">
    <source>
    </source>
</evidence>
<evidence type="ECO:0000305" key="8"/>
<evidence type="ECO:0007744" key="9">
    <source>
    </source>
</evidence>
<feature type="signal peptide" evidence="6">
    <location>
        <begin position="1"/>
        <end position="27"/>
    </location>
</feature>
<feature type="chain" id="PRO_0000007658" description="Matrilin-3">
    <location>
        <begin position="28"/>
        <end position="481"/>
    </location>
</feature>
<feature type="domain" description="VWFA" evidence="5">
    <location>
        <begin position="78"/>
        <end position="253"/>
    </location>
</feature>
<feature type="domain" description="EGF-like 1" evidence="4">
    <location>
        <begin position="259"/>
        <end position="300"/>
    </location>
</feature>
<feature type="domain" description="EGF-like 2" evidence="4">
    <location>
        <begin position="301"/>
        <end position="342"/>
    </location>
</feature>
<feature type="domain" description="EGF-like 3" evidence="4">
    <location>
        <begin position="343"/>
        <end position="384"/>
    </location>
</feature>
<feature type="domain" description="EGF-like 4" evidence="4">
    <location>
        <begin position="385"/>
        <end position="426"/>
    </location>
</feature>
<feature type="coiled-coil region" evidence="3">
    <location>
        <begin position="451"/>
        <end position="475"/>
    </location>
</feature>
<feature type="modified residue" description="Omega-N-methylarginine" evidence="9">
    <location>
        <position position="193"/>
    </location>
</feature>
<feature type="modified residue" description="Phosphoserine; by FAM20C" evidence="2">
    <location>
        <position position="436"/>
    </location>
</feature>
<feature type="glycosylation site" description="N-linked (GlcNAc...) asparagine" evidence="3">
    <location>
        <position position="321"/>
    </location>
</feature>
<feature type="disulfide bond" evidence="4">
    <location>
        <begin position="263"/>
        <end position="274"/>
    </location>
</feature>
<feature type="disulfide bond" evidence="4">
    <location>
        <begin position="270"/>
        <end position="284"/>
    </location>
</feature>
<feature type="disulfide bond" evidence="4">
    <location>
        <begin position="286"/>
        <end position="299"/>
    </location>
</feature>
<feature type="disulfide bond" evidence="4">
    <location>
        <begin position="305"/>
        <end position="316"/>
    </location>
</feature>
<feature type="disulfide bond" evidence="4">
    <location>
        <begin position="312"/>
        <end position="326"/>
    </location>
</feature>
<feature type="disulfide bond" evidence="4">
    <location>
        <begin position="328"/>
        <end position="341"/>
    </location>
</feature>
<feature type="disulfide bond" evidence="4">
    <location>
        <begin position="347"/>
        <end position="358"/>
    </location>
</feature>
<feature type="disulfide bond" evidence="4">
    <location>
        <begin position="354"/>
        <end position="368"/>
    </location>
</feature>
<feature type="disulfide bond" evidence="4">
    <location>
        <begin position="370"/>
        <end position="383"/>
    </location>
</feature>
<feature type="disulfide bond" evidence="4">
    <location>
        <begin position="389"/>
        <end position="400"/>
    </location>
</feature>
<feature type="disulfide bond" evidence="4">
    <location>
        <begin position="396"/>
        <end position="410"/>
    </location>
</feature>
<feature type="disulfide bond" evidence="4">
    <location>
        <begin position="412"/>
        <end position="425"/>
    </location>
</feature>
<feature type="mutagenesis site" description="Prevents Matn3 protein aggregation; in association with D-189 and A-258." evidence="7">
    <original>C</original>
    <variation>A</variation>
    <location>
        <position position="72"/>
    </location>
</feature>
<feature type="mutagenesis site" description="Increased protein levels of Creld2 and Manf in chondrocytes. Prevents Matn3 protein aggregation; in association with A-72 and A-258." evidence="7">
    <original>V</original>
    <variation>D</variation>
    <location>
        <position position="189"/>
    </location>
</feature>
<feature type="mutagenesis site" description="Prevents Matn3 protein aggregation; in association with A-72 and D-189." evidence="7">
    <original>C</original>
    <variation>A</variation>
    <location>
        <position position="258"/>
    </location>
</feature>
<feature type="sequence conflict" description="In Ref. 1; CAA71532." evidence="8" ref="1">
    <original>V</original>
    <variation>I</variation>
    <location>
        <position position="317"/>
    </location>
</feature>
<organism>
    <name type="scientific">Mus musculus</name>
    <name type="common">Mouse</name>
    <dbReference type="NCBI Taxonomy" id="10090"/>
    <lineage>
        <taxon>Eukaryota</taxon>
        <taxon>Metazoa</taxon>
        <taxon>Chordata</taxon>
        <taxon>Craniata</taxon>
        <taxon>Vertebrata</taxon>
        <taxon>Euteleostomi</taxon>
        <taxon>Mammalia</taxon>
        <taxon>Eutheria</taxon>
        <taxon>Euarchontoglires</taxon>
        <taxon>Glires</taxon>
        <taxon>Rodentia</taxon>
        <taxon>Myomorpha</taxon>
        <taxon>Muroidea</taxon>
        <taxon>Muridae</taxon>
        <taxon>Murinae</taxon>
        <taxon>Mus</taxon>
        <taxon>Mus</taxon>
    </lineage>
</organism>
<gene>
    <name type="primary">Matn3</name>
</gene>
<accession>O35701</accession>
<accession>Q543Q2</accession>
<accession>Q9JHM0</accession>
<proteinExistence type="evidence at protein level"/>
<keyword id="KW-0175">Coiled coil</keyword>
<keyword id="KW-0903">Direct protein sequencing</keyword>
<keyword id="KW-1015">Disulfide bond</keyword>
<keyword id="KW-0245">EGF-like domain</keyword>
<keyword id="KW-0325">Glycoprotein</keyword>
<keyword id="KW-0488">Methylation</keyword>
<keyword id="KW-0597">Phosphoprotein</keyword>
<keyword id="KW-1185">Reference proteome</keyword>
<keyword id="KW-0677">Repeat</keyword>
<keyword id="KW-0964">Secreted</keyword>
<keyword id="KW-0732">Signal</keyword>
<protein>
    <recommendedName>
        <fullName>Matrilin-3</fullName>
    </recommendedName>
</protein>
<dbReference type="EMBL" id="Y10521">
    <property type="protein sequence ID" value="CAA71532.1"/>
    <property type="molecule type" value="mRNA"/>
</dbReference>
<dbReference type="EMBL" id="AJ242929">
    <property type="protein sequence ID" value="CAB72265.1"/>
    <property type="molecule type" value="Genomic_DNA"/>
</dbReference>
<dbReference type="EMBL" id="AJ242930">
    <property type="protein sequence ID" value="CAB72265.1"/>
    <property type="status" value="JOINED"/>
    <property type="molecule type" value="Genomic_DNA"/>
</dbReference>
<dbReference type="EMBL" id="AJ242931">
    <property type="protein sequence ID" value="CAB72265.1"/>
    <property type="status" value="JOINED"/>
    <property type="molecule type" value="Genomic_DNA"/>
</dbReference>
<dbReference type="EMBL" id="AJ242932">
    <property type="protein sequence ID" value="CAB72265.1"/>
    <property type="status" value="JOINED"/>
    <property type="molecule type" value="Genomic_DNA"/>
</dbReference>
<dbReference type="EMBL" id="AJ242933">
    <property type="protein sequence ID" value="CAB72265.1"/>
    <property type="status" value="JOINED"/>
    <property type="molecule type" value="Genomic_DNA"/>
</dbReference>
<dbReference type="EMBL" id="AJ242934">
    <property type="protein sequence ID" value="CAB72265.1"/>
    <property type="status" value="JOINED"/>
    <property type="molecule type" value="Genomic_DNA"/>
</dbReference>
<dbReference type="EMBL" id="AJ242935">
    <property type="protein sequence ID" value="CAB72265.1"/>
    <property type="status" value="JOINED"/>
    <property type="molecule type" value="Genomic_DNA"/>
</dbReference>
<dbReference type="EMBL" id="AJ242936">
    <property type="protein sequence ID" value="CAB72265.1"/>
    <property type="status" value="JOINED"/>
    <property type="molecule type" value="Genomic_DNA"/>
</dbReference>
<dbReference type="EMBL" id="AK048456">
    <property type="protein sequence ID" value="BAC33343.1"/>
    <property type="molecule type" value="mRNA"/>
</dbReference>
<dbReference type="CCDS" id="CCDS25806.1"/>
<dbReference type="RefSeq" id="NP_034900.4">
    <property type="nucleotide sequence ID" value="NM_010770.4"/>
</dbReference>
<dbReference type="SMR" id="O35701"/>
<dbReference type="ComplexPortal" id="CPX-4501">
    <property type="entry name" value="Matrilin-3 complex"/>
</dbReference>
<dbReference type="ComplexPortal" id="CPX-4504">
    <property type="entry name" value="Matrilin-1 - Matrilin-3 complex"/>
</dbReference>
<dbReference type="FunCoup" id="O35701">
    <property type="interactions" value="91"/>
</dbReference>
<dbReference type="STRING" id="10090.ENSMUSP00000020899"/>
<dbReference type="GlyCosmos" id="O35701">
    <property type="glycosylation" value="1 site, No reported glycans"/>
</dbReference>
<dbReference type="GlyGen" id="O35701">
    <property type="glycosylation" value="1 site"/>
</dbReference>
<dbReference type="iPTMnet" id="O35701"/>
<dbReference type="PhosphoSitePlus" id="O35701"/>
<dbReference type="jPOST" id="O35701"/>
<dbReference type="PaxDb" id="10090-ENSMUSP00000020899"/>
<dbReference type="ProteomicsDB" id="295699"/>
<dbReference type="Antibodypedia" id="27187">
    <property type="antibodies" value="214 antibodies from 27 providers"/>
</dbReference>
<dbReference type="DNASU" id="17182"/>
<dbReference type="Ensembl" id="ENSMUST00000020899.5">
    <property type="protein sequence ID" value="ENSMUSP00000020899.5"/>
    <property type="gene ID" value="ENSMUSG00000020583.5"/>
</dbReference>
<dbReference type="GeneID" id="17182"/>
<dbReference type="KEGG" id="mmu:17182"/>
<dbReference type="UCSC" id="uc007nag.2">
    <property type="organism name" value="mouse"/>
</dbReference>
<dbReference type="AGR" id="MGI:1328350"/>
<dbReference type="CTD" id="4148"/>
<dbReference type="MGI" id="MGI:1328350">
    <property type="gene designation" value="Matn3"/>
</dbReference>
<dbReference type="VEuPathDB" id="HostDB:ENSMUSG00000020583"/>
<dbReference type="eggNOG" id="KOG1217">
    <property type="taxonomic scope" value="Eukaryota"/>
</dbReference>
<dbReference type="GeneTree" id="ENSGT00940000157581"/>
<dbReference type="HOGENOM" id="CLU_008905_6_1_1"/>
<dbReference type="InParanoid" id="O35701"/>
<dbReference type="OMA" id="CALGTHQ"/>
<dbReference type="OrthoDB" id="6022609at2759"/>
<dbReference type="PhylomeDB" id="O35701"/>
<dbReference type="TreeFam" id="TF330078"/>
<dbReference type="Reactome" id="R-MMU-3000178">
    <property type="pathway name" value="ECM proteoglycans"/>
</dbReference>
<dbReference type="Reactome" id="R-MMU-381426">
    <property type="pathway name" value="Regulation of Insulin-like Growth Factor (IGF) transport and uptake by Insulin-like Growth Factor Binding Proteins (IGFBPs)"/>
</dbReference>
<dbReference type="Reactome" id="R-MMU-8957275">
    <property type="pathway name" value="Post-translational protein phosphorylation"/>
</dbReference>
<dbReference type="BioGRID-ORCS" id="17182">
    <property type="hits" value="2 hits in 79 CRISPR screens"/>
</dbReference>
<dbReference type="PRO" id="PR:O35701"/>
<dbReference type="Proteomes" id="UP000000589">
    <property type="component" value="Chromosome 12"/>
</dbReference>
<dbReference type="RNAct" id="O35701">
    <property type="molecule type" value="protein"/>
</dbReference>
<dbReference type="Bgee" id="ENSMUSG00000020583">
    <property type="expression patterns" value="Expressed in intervertebral disk and 85 other cell types or tissues"/>
</dbReference>
<dbReference type="GO" id="GO:0031012">
    <property type="term" value="C:extracellular matrix"/>
    <property type="evidence" value="ECO:0000314"/>
    <property type="project" value="MGI"/>
</dbReference>
<dbReference type="GO" id="GO:0005576">
    <property type="term" value="C:extracellular region"/>
    <property type="evidence" value="ECO:0007669"/>
    <property type="project" value="UniProtKB-SubCell"/>
</dbReference>
<dbReference type="GO" id="GO:0120216">
    <property type="term" value="C:matrilin complex"/>
    <property type="evidence" value="ECO:0000353"/>
    <property type="project" value="ComplexPortal"/>
</dbReference>
<dbReference type="GO" id="GO:0005509">
    <property type="term" value="F:calcium ion binding"/>
    <property type="evidence" value="ECO:0007669"/>
    <property type="project" value="InterPro"/>
</dbReference>
<dbReference type="GO" id="GO:0051216">
    <property type="term" value="P:cartilage development"/>
    <property type="evidence" value="ECO:0000315"/>
    <property type="project" value="MGI"/>
</dbReference>
<dbReference type="GO" id="GO:0030198">
    <property type="term" value="P:extracellular matrix organization"/>
    <property type="evidence" value="ECO:0000314"/>
    <property type="project" value="ComplexPortal"/>
</dbReference>
<dbReference type="FunFam" id="3.40.50.410:FF:000018">
    <property type="entry name" value="Matrilin 1"/>
    <property type="match status" value="1"/>
</dbReference>
<dbReference type="FunFam" id="1.20.5.30:FF:000004">
    <property type="entry name" value="Matrilin 3"/>
    <property type="match status" value="1"/>
</dbReference>
<dbReference type="FunFam" id="2.10.25.10:FF:000126">
    <property type="entry name" value="Matrilin 3"/>
    <property type="match status" value="4"/>
</dbReference>
<dbReference type="Gene3D" id="1.20.5.30">
    <property type="match status" value="1"/>
</dbReference>
<dbReference type="Gene3D" id="2.10.25.10">
    <property type="entry name" value="Laminin"/>
    <property type="match status" value="4"/>
</dbReference>
<dbReference type="Gene3D" id="3.40.50.410">
    <property type="entry name" value="von Willebrand factor, type A domain"/>
    <property type="match status" value="1"/>
</dbReference>
<dbReference type="InterPro" id="IPR026823">
    <property type="entry name" value="cEGF"/>
</dbReference>
<dbReference type="InterPro" id="IPR050525">
    <property type="entry name" value="ECM_Assembly_Org"/>
</dbReference>
<dbReference type="InterPro" id="IPR001881">
    <property type="entry name" value="EGF-like_Ca-bd_dom"/>
</dbReference>
<dbReference type="InterPro" id="IPR000742">
    <property type="entry name" value="EGF-like_dom"/>
</dbReference>
<dbReference type="InterPro" id="IPR009030">
    <property type="entry name" value="Growth_fac_rcpt_cys_sf"/>
</dbReference>
<dbReference type="InterPro" id="IPR036337">
    <property type="entry name" value="Matrilin_cc_sf"/>
</dbReference>
<dbReference type="InterPro" id="IPR019466">
    <property type="entry name" value="Matrilin_coiled-coil_trimer"/>
</dbReference>
<dbReference type="InterPro" id="IPR049883">
    <property type="entry name" value="NOTCH1_EGF-like"/>
</dbReference>
<dbReference type="InterPro" id="IPR002035">
    <property type="entry name" value="VWF_A"/>
</dbReference>
<dbReference type="InterPro" id="IPR036465">
    <property type="entry name" value="vWFA_dom_sf"/>
</dbReference>
<dbReference type="PANTHER" id="PTHR24020">
    <property type="entry name" value="COLLAGEN ALPHA"/>
    <property type="match status" value="1"/>
</dbReference>
<dbReference type="PANTHER" id="PTHR24020:SF12">
    <property type="entry name" value="MATRILIN-3"/>
    <property type="match status" value="1"/>
</dbReference>
<dbReference type="Pfam" id="PF12662">
    <property type="entry name" value="cEGF"/>
    <property type="match status" value="2"/>
</dbReference>
<dbReference type="Pfam" id="PF07645">
    <property type="entry name" value="EGF_CA"/>
    <property type="match status" value="1"/>
</dbReference>
<dbReference type="Pfam" id="PF10393">
    <property type="entry name" value="Matrilin_ccoil"/>
    <property type="match status" value="1"/>
</dbReference>
<dbReference type="Pfam" id="PF00092">
    <property type="entry name" value="VWA"/>
    <property type="match status" value="1"/>
</dbReference>
<dbReference type="PRINTS" id="PR00453">
    <property type="entry name" value="VWFADOMAIN"/>
</dbReference>
<dbReference type="SMART" id="SM00181">
    <property type="entry name" value="EGF"/>
    <property type="match status" value="4"/>
</dbReference>
<dbReference type="SMART" id="SM00179">
    <property type="entry name" value="EGF_CA"/>
    <property type="match status" value="4"/>
</dbReference>
<dbReference type="SMART" id="SM01279">
    <property type="entry name" value="Matrilin_ccoil"/>
    <property type="match status" value="1"/>
</dbReference>
<dbReference type="SMART" id="SM00327">
    <property type="entry name" value="VWA"/>
    <property type="match status" value="1"/>
</dbReference>
<dbReference type="SUPFAM" id="SSF58002">
    <property type="entry name" value="Chicken cartilage matrix protein"/>
    <property type="match status" value="1"/>
</dbReference>
<dbReference type="SUPFAM" id="SSF57196">
    <property type="entry name" value="EGF/Laminin"/>
    <property type="match status" value="1"/>
</dbReference>
<dbReference type="SUPFAM" id="SSF57184">
    <property type="entry name" value="Growth factor receptor domain"/>
    <property type="match status" value="1"/>
</dbReference>
<dbReference type="SUPFAM" id="SSF53300">
    <property type="entry name" value="vWA-like"/>
    <property type="match status" value="1"/>
</dbReference>
<dbReference type="PROSITE" id="PS01186">
    <property type="entry name" value="EGF_2"/>
    <property type="match status" value="4"/>
</dbReference>
<dbReference type="PROSITE" id="PS50026">
    <property type="entry name" value="EGF_3"/>
    <property type="match status" value="4"/>
</dbReference>
<dbReference type="PROSITE" id="PS50234">
    <property type="entry name" value="VWFA"/>
    <property type="match status" value="1"/>
</dbReference>
<comment type="function">
    <text evidence="6">Major component of the extracellular matrix of cartilage and may play a role in the formation of extracellular filamentous networks.</text>
</comment>
<comment type="subunit">
    <text evidence="1 7">Can form homooligomers (monomers, dimers, trimers and tetramers) and heterooligomers with matrilin-1. Interacts with COMP (By similarity). Component of a complex containing at least CRELD2, MANF, MATN3 and PDIA4 (PubMed:23956175).</text>
</comment>
<comment type="subcellular location">
    <subcellularLocation>
        <location evidence="6 7">Secreted</location>
    </subcellularLocation>
</comment>
<comment type="tissue specificity">
    <text>Strongly expressed in growing skeletal tissue such as epiphyseal growth plate or in bone undergoing growth and remodeling. In the bone, actively synthesized in osteoblasts and osteocytes. Expressed in cartilage of sternum, femur, vertebrae, trachea, articular and epiphyseal cartilage, cartilage of developing bones and bones.</text>
</comment>
<comment type="developmental stage">
    <text>The earliest expression could be detected in a 12.5 dpc embryo in the cartilage anlage of the developing bones. At 14.5 dpc the primordial skeleton shows a strong expression. At birth present in the developing occipital bones, bones of the nasal cavity, manubrium and corpus of sternum as well as in the cartilage plates of trachea. At no stage of development detected in extraskeletal tissues.</text>
</comment>
<name>MATN3_MOUSE</name>
<sequence length="481" mass="51845">MLLSAPLRHLPGLLLLLWPLLLLPSLAAPGRLARASVRRLGTRVPGGSPGHLSALATSTRAPYSGGRGAGVCKSRPLDLVFIIDSSRSVRPLEFTKVKTFVSRIIDTLDIGATDTRVAVVNYASTVKIEFQLNTYSDKQALKQAVARITPLSTGTMSGLAIQTAMEEAFTVEAGARGPMSNIPKVAIIVTDGRPQDQVNEVAARARASGIELYAVGVDRADMESLKMMASKPLEEHVFYVETYGVIEKLSARFQETFCALDQCMLGTHQCQHVCVSDGDGKHHCECSQGYTLNADGKTCSAIDKCALSTHGCEQICVNDRNGSYHCECYGGYALNADRRTCAALDKCASGTHGCQHICVNDGAGSHHCECFEGYTLNADKKTCSVRNKCALGTHGCQHICVSDGAVAYHCDCFPGYTLNDDKKTCSDIEEARSLISIEDACGCGATLAFQEKVSSHLQKLNTKLDNILKKLKVTEYGQVHR</sequence>
<reference key="1">
    <citation type="journal article" date="1997" name="FEBS Lett.">
        <title>Primary structure of matrilin-3, a new member of a family of extracellular matrix proteins related to cartilage matrix protein (matrilin-1) and von Willebrand factor.</title>
        <authorList>
            <person name="Wagener R."/>
            <person name="Kobbe B."/>
            <person name="Paulsson M."/>
        </authorList>
    </citation>
    <scope>NUCLEOTIDE SEQUENCE [MRNA]</scope>
    <source>
        <strain>C57BL/6 X CBA</strain>
    </source>
</reference>
<reference key="2">
    <citation type="journal article" date="2000" name="Mamm. Genome">
        <title>Structure and mapping of the mouse matrilin-3 gene (Matn3), a member of a gene family containing a U12-type AT-AC intron.</title>
        <authorList>
            <person name="Wagener R."/>
            <person name="Kobbe B."/>
            <person name="Aszodi A."/>
            <person name="Liu Z."/>
            <person name="Beier D.R."/>
            <person name="Paulsson M."/>
        </authorList>
    </citation>
    <scope>NUCLEOTIDE SEQUENCE [GENOMIC DNA]</scope>
    <source>
        <strain>129/SvJ</strain>
        <tissue>Liver</tissue>
    </source>
</reference>
<reference key="3">
    <citation type="journal article" date="2005" name="Science">
        <title>The transcriptional landscape of the mammalian genome.</title>
        <authorList>
            <person name="Carninci P."/>
            <person name="Kasukawa T."/>
            <person name="Katayama S."/>
            <person name="Gough J."/>
            <person name="Frith M.C."/>
            <person name="Maeda N."/>
            <person name="Oyama R."/>
            <person name="Ravasi T."/>
            <person name="Lenhard B."/>
            <person name="Wells C."/>
            <person name="Kodzius R."/>
            <person name="Shimokawa K."/>
            <person name="Bajic V.B."/>
            <person name="Brenner S.E."/>
            <person name="Batalov S."/>
            <person name="Forrest A.R."/>
            <person name="Zavolan M."/>
            <person name="Davis M.J."/>
            <person name="Wilming L.G."/>
            <person name="Aidinis V."/>
            <person name="Allen J.E."/>
            <person name="Ambesi-Impiombato A."/>
            <person name="Apweiler R."/>
            <person name="Aturaliya R.N."/>
            <person name="Bailey T.L."/>
            <person name="Bansal M."/>
            <person name="Baxter L."/>
            <person name="Beisel K.W."/>
            <person name="Bersano T."/>
            <person name="Bono H."/>
            <person name="Chalk A.M."/>
            <person name="Chiu K.P."/>
            <person name="Choudhary V."/>
            <person name="Christoffels A."/>
            <person name="Clutterbuck D.R."/>
            <person name="Crowe M.L."/>
            <person name="Dalla E."/>
            <person name="Dalrymple B.P."/>
            <person name="de Bono B."/>
            <person name="Della Gatta G."/>
            <person name="di Bernardo D."/>
            <person name="Down T."/>
            <person name="Engstrom P."/>
            <person name="Fagiolini M."/>
            <person name="Faulkner G."/>
            <person name="Fletcher C.F."/>
            <person name="Fukushima T."/>
            <person name="Furuno M."/>
            <person name="Futaki S."/>
            <person name="Gariboldi M."/>
            <person name="Georgii-Hemming P."/>
            <person name="Gingeras T.R."/>
            <person name="Gojobori T."/>
            <person name="Green R.E."/>
            <person name="Gustincich S."/>
            <person name="Harbers M."/>
            <person name="Hayashi Y."/>
            <person name="Hensch T.K."/>
            <person name="Hirokawa N."/>
            <person name="Hill D."/>
            <person name="Huminiecki L."/>
            <person name="Iacono M."/>
            <person name="Ikeo K."/>
            <person name="Iwama A."/>
            <person name="Ishikawa T."/>
            <person name="Jakt M."/>
            <person name="Kanapin A."/>
            <person name="Katoh M."/>
            <person name="Kawasawa Y."/>
            <person name="Kelso J."/>
            <person name="Kitamura H."/>
            <person name="Kitano H."/>
            <person name="Kollias G."/>
            <person name="Krishnan S.P."/>
            <person name="Kruger A."/>
            <person name="Kummerfeld S.K."/>
            <person name="Kurochkin I.V."/>
            <person name="Lareau L.F."/>
            <person name="Lazarevic D."/>
            <person name="Lipovich L."/>
            <person name="Liu J."/>
            <person name="Liuni S."/>
            <person name="McWilliam S."/>
            <person name="Madan Babu M."/>
            <person name="Madera M."/>
            <person name="Marchionni L."/>
            <person name="Matsuda H."/>
            <person name="Matsuzawa S."/>
            <person name="Miki H."/>
            <person name="Mignone F."/>
            <person name="Miyake S."/>
            <person name="Morris K."/>
            <person name="Mottagui-Tabar S."/>
            <person name="Mulder N."/>
            <person name="Nakano N."/>
            <person name="Nakauchi H."/>
            <person name="Ng P."/>
            <person name="Nilsson R."/>
            <person name="Nishiguchi S."/>
            <person name="Nishikawa S."/>
            <person name="Nori F."/>
            <person name="Ohara O."/>
            <person name="Okazaki Y."/>
            <person name="Orlando V."/>
            <person name="Pang K.C."/>
            <person name="Pavan W.J."/>
            <person name="Pavesi G."/>
            <person name="Pesole G."/>
            <person name="Petrovsky N."/>
            <person name="Piazza S."/>
            <person name="Reed J."/>
            <person name="Reid J.F."/>
            <person name="Ring B.Z."/>
            <person name="Ringwald M."/>
            <person name="Rost B."/>
            <person name="Ruan Y."/>
            <person name="Salzberg S.L."/>
            <person name="Sandelin A."/>
            <person name="Schneider C."/>
            <person name="Schoenbach C."/>
            <person name="Sekiguchi K."/>
            <person name="Semple C.A."/>
            <person name="Seno S."/>
            <person name="Sessa L."/>
            <person name="Sheng Y."/>
            <person name="Shibata Y."/>
            <person name="Shimada H."/>
            <person name="Shimada K."/>
            <person name="Silva D."/>
            <person name="Sinclair B."/>
            <person name="Sperling S."/>
            <person name="Stupka E."/>
            <person name="Sugiura K."/>
            <person name="Sultana R."/>
            <person name="Takenaka Y."/>
            <person name="Taki K."/>
            <person name="Tammoja K."/>
            <person name="Tan S.L."/>
            <person name="Tang S."/>
            <person name="Taylor M.S."/>
            <person name="Tegner J."/>
            <person name="Teichmann S.A."/>
            <person name="Ueda H.R."/>
            <person name="van Nimwegen E."/>
            <person name="Verardo R."/>
            <person name="Wei C.L."/>
            <person name="Yagi K."/>
            <person name="Yamanishi H."/>
            <person name="Zabarovsky E."/>
            <person name="Zhu S."/>
            <person name="Zimmer A."/>
            <person name="Hide W."/>
            <person name="Bult C."/>
            <person name="Grimmond S.M."/>
            <person name="Teasdale R.D."/>
            <person name="Liu E.T."/>
            <person name="Brusic V."/>
            <person name="Quackenbush J."/>
            <person name="Wahlestedt C."/>
            <person name="Mattick J.S."/>
            <person name="Hume D.A."/>
            <person name="Kai C."/>
            <person name="Sasaki D."/>
            <person name="Tomaru Y."/>
            <person name="Fukuda S."/>
            <person name="Kanamori-Katayama M."/>
            <person name="Suzuki M."/>
            <person name="Aoki J."/>
            <person name="Arakawa T."/>
            <person name="Iida J."/>
            <person name="Imamura K."/>
            <person name="Itoh M."/>
            <person name="Kato T."/>
            <person name="Kawaji H."/>
            <person name="Kawagashira N."/>
            <person name="Kawashima T."/>
            <person name="Kojima M."/>
            <person name="Kondo S."/>
            <person name="Konno H."/>
            <person name="Nakano K."/>
            <person name="Ninomiya N."/>
            <person name="Nishio T."/>
            <person name="Okada M."/>
            <person name="Plessy C."/>
            <person name="Shibata K."/>
            <person name="Shiraki T."/>
            <person name="Suzuki S."/>
            <person name="Tagami M."/>
            <person name="Waki K."/>
            <person name="Watahiki A."/>
            <person name="Okamura-Oho Y."/>
            <person name="Suzuki H."/>
            <person name="Kawai J."/>
            <person name="Hayashizaki Y."/>
        </authorList>
    </citation>
    <scope>NUCLEOTIDE SEQUENCE [LARGE SCALE MRNA]</scope>
    <source>
        <strain>C57BL/6J</strain>
        <tissue>Head</tissue>
    </source>
</reference>
<reference key="4">
    <citation type="journal article" date="2000" name="J. Biol. Chem.">
        <title>Molecular structure and tissue distribution of matrilin-3, a filament-forming extracellular matrix protein expressed during skeletal development.</title>
        <authorList>
            <person name="Klatt A.R."/>
            <person name="Nitsche D.P."/>
            <person name="Kobbe B."/>
            <person name="Morgelin M."/>
            <person name="Paulsson M."/>
            <person name="Wagener R."/>
        </authorList>
    </citation>
    <scope>PROTEIN SEQUENCE OF N-TERMINUS</scope>
    <scope>CHARACTERIZATION</scope>
    <scope>FUNCTION</scope>
    <scope>SUBCELLULAR LOCATION</scope>
</reference>
<reference key="5">
    <citation type="journal article" date="2013" name="Hum. Mol. Genet.">
        <title>Armet/Manf and Creld2 are components of a specialized ER stress response provoked by inappropriate formation of disulphide bonds: implications for genetic skeletal diseases.</title>
        <authorList>
            <person name="Hartley C.L."/>
            <person name="Edwards S."/>
            <person name="Mullan L."/>
            <person name="Bell P.A."/>
            <person name="Fresquet M."/>
            <person name="Boot-Handford R.P."/>
            <person name="Briggs M.D."/>
        </authorList>
    </citation>
    <scope>IDENTIFICATION IN COMPLEX WITH CRELD2; MANF AND PDIA4</scope>
    <scope>SUBCELLULAR LOCATION</scope>
    <scope>MUTAGENESIS OF CYS-72; VAL-189 AND CYS-258</scope>
</reference>
<reference key="6">
    <citation type="journal article" date="2014" name="Mol. Cell. Proteomics">
        <title>Immunoaffinity enrichment and mass spectrometry analysis of protein methylation.</title>
        <authorList>
            <person name="Guo A."/>
            <person name="Gu H."/>
            <person name="Zhou J."/>
            <person name="Mulhern D."/>
            <person name="Wang Y."/>
            <person name="Lee K.A."/>
            <person name="Yang V."/>
            <person name="Aguiar M."/>
            <person name="Kornhauser J."/>
            <person name="Jia X."/>
            <person name="Ren J."/>
            <person name="Beausoleil S.A."/>
            <person name="Silva J.C."/>
            <person name="Vemulapalli V."/>
            <person name="Bedford M.T."/>
            <person name="Comb M.J."/>
        </authorList>
    </citation>
    <scope>METHYLATION [LARGE SCALE ANALYSIS] AT ARG-193</scope>
    <scope>IDENTIFICATION BY MASS SPECTROMETRY [LARGE SCALE ANALYSIS]</scope>
    <source>
        <tissue>Brain</tissue>
    </source>
</reference>